<dbReference type="EC" id="3.1.26.4" evidence="1"/>
<dbReference type="EMBL" id="CR767821">
    <property type="protein sequence ID" value="CAH57892.1"/>
    <property type="molecule type" value="Genomic_DNA"/>
</dbReference>
<dbReference type="EMBL" id="CR925678">
    <property type="protein sequence ID" value="CAI26669.1"/>
    <property type="status" value="ALT_INIT"/>
    <property type="molecule type" value="Genomic_DNA"/>
</dbReference>
<dbReference type="RefSeq" id="WP_011154860.1">
    <property type="nucleotide sequence ID" value="NC_006832.1"/>
</dbReference>
<dbReference type="SMR" id="Q5HC01"/>
<dbReference type="KEGG" id="eru:Erum1760"/>
<dbReference type="KEGG" id="erw:ERWE_CDS_01750"/>
<dbReference type="eggNOG" id="COG0164">
    <property type="taxonomic scope" value="Bacteria"/>
</dbReference>
<dbReference type="HOGENOM" id="CLU_036532_3_2_5"/>
<dbReference type="Proteomes" id="UP000001021">
    <property type="component" value="Chromosome"/>
</dbReference>
<dbReference type="GO" id="GO:0005737">
    <property type="term" value="C:cytoplasm"/>
    <property type="evidence" value="ECO:0007669"/>
    <property type="project" value="UniProtKB-SubCell"/>
</dbReference>
<dbReference type="GO" id="GO:0032299">
    <property type="term" value="C:ribonuclease H2 complex"/>
    <property type="evidence" value="ECO:0007669"/>
    <property type="project" value="TreeGrafter"/>
</dbReference>
<dbReference type="GO" id="GO:0030145">
    <property type="term" value="F:manganese ion binding"/>
    <property type="evidence" value="ECO:0007669"/>
    <property type="project" value="UniProtKB-UniRule"/>
</dbReference>
<dbReference type="GO" id="GO:0003723">
    <property type="term" value="F:RNA binding"/>
    <property type="evidence" value="ECO:0007669"/>
    <property type="project" value="InterPro"/>
</dbReference>
<dbReference type="GO" id="GO:0004523">
    <property type="term" value="F:RNA-DNA hybrid ribonuclease activity"/>
    <property type="evidence" value="ECO:0007669"/>
    <property type="project" value="UniProtKB-UniRule"/>
</dbReference>
<dbReference type="GO" id="GO:0043137">
    <property type="term" value="P:DNA replication, removal of RNA primer"/>
    <property type="evidence" value="ECO:0007669"/>
    <property type="project" value="TreeGrafter"/>
</dbReference>
<dbReference type="GO" id="GO:0006298">
    <property type="term" value="P:mismatch repair"/>
    <property type="evidence" value="ECO:0007669"/>
    <property type="project" value="TreeGrafter"/>
</dbReference>
<dbReference type="CDD" id="cd07182">
    <property type="entry name" value="RNase_HII_bacteria_HII_like"/>
    <property type="match status" value="1"/>
</dbReference>
<dbReference type="Gene3D" id="3.30.420.10">
    <property type="entry name" value="Ribonuclease H-like superfamily/Ribonuclease H"/>
    <property type="match status" value="1"/>
</dbReference>
<dbReference type="HAMAP" id="MF_00052_B">
    <property type="entry name" value="RNase_HII_B"/>
    <property type="match status" value="1"/>
</dbReference>
<dbReference type="InterPro" id="IPR022898">
    <property type="entry name" value="RNase_HII"/>
</dbReference>
<dbReference type="InterPro" id="IPR001352">
    <property type="entry name" value="RNase_HII/HIII"/>
</dbReference>
<dbReference type="InterPro" id="IPR024567">
    <property type="entry name" value="RNase_HII/HIII_dom"/>
</dbReference>
<dbReference type="InterPro" id="IPR012337">
    <property type="entry name" value="RNaseH-like_sf"/>
</dbReference>
<dbReference type="InterPro" id="IPR036397">
    <property type="entry name" value="RNaseH_sf"/>
</dbReference>
<dbReference type="NCBIfam" id="NF000595">
    <property type="entry name" value="PRK00015.1-3"/>
    <property type="match status" value="1"/>
</dbReference>
<dbReference type="PANTHER" id="PTHR10954">
    <property type="entry name" value="RIBONUCLEASE H2 SUBUNIT A"/>
    <property type="match status" value="1"/>
</dbReference>
<dbReference type="PANTHER" id="PTHR10954:SF18">
    <property type="entry name" value="RIBONUCLEASE HII"/>
    <property type="match status" value="1"/>
</dbReference>
<dbReference type="Pfam" id="PF01351">
    <property type="entry name" value="RNase_HII"/>
    <property type="match status" value="1"/>
</dbReference>
<dbReference type="SUPFAM" id="SSF53098">
    <property type="entry name" value="Ribonuclease H-like"/>
    <property type="match status" value="1"/>
</dbReference>
<dbReference type="PROSITE" id="PS51975">
    <property type="entry name" value="RNASE_H_2"/>
    <property type="match status" value="1"/>
</dbReference>
<organism>
    <name type="scientific">Ehrlichia ruminantium (strain Welgevonden)</name>
    <dbReference type="NCBI Taxonomy" id="254945"/>
    <lineage>
        <taxon>Bacteria</taxon>
        <taxon>Pseudomonadati</taxon>
        <taxon>Pseudomonadota</taxon>
        <taxon>Alphaproteobacteria</taxon>
        <taxon>Rickettsiales</taxon>
        <taxon>Anaplasmataceae</taxon>
        <taxon>Ehrlichia</taxon>
    </lineage>
</organism>
<proteinExistence type="inferred from homology"/>
<comment type="function">
    <text evidence="1">Endonuclease that specifically degrades the RNA of RNA-DNA hybrids.</text>
</comment>
<comment type="catalytic activity">
    <reaction evidence="1">
        <text>Endonucleolytic cleavage to 5'-phosphomonoester.</text>
        <dbReference type="EC" id="3.1.26.4"/>
    </reaction>
</comment>
<comment type="cofactor">
    <cofactor evidence="1">
        <name>Mn(2+)</name>
        <dbReference type="ChEBI" id="CHEBI:29035"/>
    </cofactor>
    <cofactor evidence="1">
        <name>Mg(2+)</name>
        <dbReference type="ChEBI" id="CHEBI:18420"/>
    </cofactor>
    <text evidence="1">Manganese or magnesium. Binds 1 divalent metal ion per monomer in the absence of substrate. May bind a second metal ion after substrate binding.</text>
</comment>
<comment type="subcellular location">
    <subcellularLocation>
        <location evidence="1">Cytoplasm</location>
    </subcellularLocation>
</comment>
<comment type="similarity">
    <text evidence="1">Belongs to the RNase HII family.</text>
</comment>
<comment type="sequence caution" evidence="3">
    <conflict type="erroneous initiation">
        <sequence resource="EMBL-CDS" id="CAI26669"/>
    </conflict>
</comment>
<reference key="1">
    <citation type="journal article" date="2005" name="Proc. Natl. Acad. Sci. U.S.A.">
        <title>The genome of the heartwater agent Ehrlichia ruminantium contains multiple tandem repeats of actively variable copy number.</title>
        <authorList>
            <person name="Collins N.E."/>
            <person name="Liebenberg J."/>
            <person name="de Villiers E.P."/>
            <person name="Brayton K.A."/>
            <person name="Louw E."/>
            <person name="Pretorius A."/>
            <person name="Faber F.E."/>
            <person name="van Heerden H."/>
            <person name="Josemans A."/>
            <person name="van Kleef M."/>
            <person name="Steyn H.C."/>
            <person name="van Strijp M.F."/>
            <person name="Zweygarth E."/>
            <person name="Jongejan F."/>
            <person name="Maillard J.C."/>
            <person name="Berthier D."/>
            <person name="Botha M."/>
            <person name="Joubert F."/>
            <person name="Corton C.H."/>
            <person name="Thomson N.R."/>
            <person name="Allsopp M.T."/>
            <person name="Allsopp B.A."/>
        </authorList>
    </citation>
    <scope>NUCLEOTIDE SEQUENCE [LARGE SCALE GENOMIC DNA]</scope>
    <source>
        <strain>Welgevonden</strain>
    </source>
</reference>
<reference key="2">
    <citation type="journal article" date="2006" name="J. Bacteriol.">
        <title>Comparative genomic analysis of three strains of Ehrlichia ruminantium reveals an active process of genome size plasticity.</title>
        <authorList>
            <person name="Frutos R."/>
            <person name="Viari A."/>
            <person name="Ferraz C."/>
            <person name="Morgat A."/>
            <person name="Eychenie S."/>
            <person name="Kandassamy Y."/>
            <person name="Chantal I."/>
            <person name="Bensaid A."/>
            <person name="Coissac E."/>
            <person name="Vachiery N."/>
            <person name="Demaille J."/>
            <person name="Martinez D."/>
        </authorList>
    </citation>
    <scope>NUCLEOTIDE SEQUENCE [LARGE SCALE GENOMIC DNA]</scope>
    <source>
        <strain>Welgevonden</strain>
    </source>
</reference>
<accession>Q5HC01</accession>
<accession>Q5FCZ2</accession>
<sequence>MPDFSIENEILKLKNNKECIIVGVDEVGYGSLAGPVVSAAVFFPNYNNETTQDINDSKKLTPKTRQKIYNKIITRVKWSIGFAHIFEIDEYNILNATHIAMKRALTGLNAHIDIDYVIIDGNKIPNIPWNAQAIIGGDTISTSIAAASIIAKVTRDRLMETLHIQYPQYNWNKNKGYGTKDHITSLYKYGKTIHHRNTFTPISKISYMFKNS</sequence>
<gene>
    <name evidence="1" type="primary">rnhB</name>
    <name type="ordered locus">Erum1760</name>
    <name type="ordered locus">ERWE_CDS_01750</name>
</gene>
<protein>
    <recommendedName>
        <fullName evidence="1">Ribonuclease HII</fullName>
        <shortName evidence="1">RNase HII</shortName>
        <ecNumber evidence="1">3.1.26.4</ecNumber>
    </recommendedName>
</protein>
<feature type="chain" id="PRO_0000235723" description="Ribonuclease HII">
    <location>
        <begin position="1"/>
        <end position="212"/>
    </location>
</feature>
<feature type="domain" description="RNase H type-2" evidence="2">
    <location>
        <begin position="19"/>
        <end position="212"/>
    </location>
</feature>
<feature type="binding site" evidence="1">
    <location>
        <position position="25"/>
    </location>
    <ligand>
        <name>a divalent metal cation</name>
        <dbReference type="ChEBI" id="CHEBI:60240"/>
    </ligand>
</feature>
<feature type="binding site" evidence="1">
    <location>
        <position position="26"/>
    </location>
    <ligand>
        <name>a divalent metal cation</name>
        <dbReference type="ChEBI" id="CHEBI:60240"/>
    </ligand>
</feature>
<feature type="binding site" evidence="1">
    <location>
        <position position="120"/>
    </location>
    <ligand>
        <name>a divalent metal cation</name>
        <dbReference type="ChEBI" id="CHEBI:60240"/>
    </ligand>
</feature>
<name>RNH2_EHRRW</name>
<evidence type="ECO:0000255" key="1">
    <source>
        <dbReference type="HAMAP-Rule" id="MF_00052"/>
    </source>
</evidence>
<evidence type="ECO:0000255" key="2">
    <source>
        <dbReference type="PROSITE-ProRule" id="PRU01319"/>
    </source>
</evidence>
<evidence type="ECO:0000305" key="3"/>
<keyword id="KW-0963">Cytoplasm</keyword>
<keyword id="KW-0255">Endonuclease</keyword>
<keyword id="KW-0378">Hydrolase</keyword>
<keyword id="KW-0464">Manganese</keyword>
<keyword id="KW-0479">Metal-binding</keyword>
<keyword id="KW-0540">Nuclease</keyword>